<feature type="chain" id="PRO_1000078305" description="Sec-independent protein translocase protein TatA">
    <location>
        <begin position="1"/>
        <end position="65"/>
    </location>
</feature>
<feature type="transmembrane region" description="Helical" evidence="1">
    <location>
        <begin position="9"/>
        <end position="29"/>
    </location>
</feature>
<feature type="region of interest" description="Disordered" evidence="2">
    <location>
        <begin position="40"/>
        <end position="65"/>
    </location>
</feature>
<feature type="compositionally biased region" description="Basic and acidic residues" evidence="2">
    <location>
        <begin position="43"/>
        <end position="65"/>
    </location>
</feature>
<comment type="function">
    <text evidence="1">Part of the twin-arginine translocation (Tat) system that transports large folded proteins containing a characteristic twin-arginine motif in their signal peptide across membranes. TatA could form the protein-conducting channel of the Tat system.</text>
</comment>
<comment type="subunit">
    <text evidence="1">Forms a complex with TatC.</text>
</comment>
<comment type="subcellular location">
    <subcellularLocation>
        <location evidence="1">Cell membrane</location>
        <topology evidence="1">Single-pass membrane protein</topology>
    </subcellularLocation>
</comment>
<comment type="similarity">
    <text evidence="1">Belongs to the TatA/E family.</text>
</comment>
<dbReference type="EMBL" id="CP000688">
    <property type="protein sequence ID" value="ABQ17925.1"/>
    <property type="molecule type" value="Genomic_DNA"/>
</dbReference>
<dbReference type="SMR" id="A5FPF2"/>
<dbReference type="KEGG" id="deb:DehaBAV1_1348"/>
<dbReference type="PATRIC" id="fig|216389.18.peg.1421"/>
<dbReference type="HOGENOM" id="CLU_086034_6_1_0"/>
<dbReference type="GO" id="GO:0033281">
    <property type="term" value="C:TAT protein transport complex"/>
    <property type="evidence" value="ECO:0007669"/>
    <property type="project" value="UniProtKB-UniRule"/>
</dbReference>
<dbReference type="GO" id="GO:0008320">
    <property type="term" value="F:protein transmembrane transporter activity"/>
    <property type="evidence" value="ECO:0007669"/>
    <property type="project" value="UniProtKB-UniRule"/>
</dbReference>
<dbReference type="GO" id="GO:0043953">
    <property type="term" value="P:protein transport by the Tat complex"/>
    <property type="evidence" value="ECO:0007669"/>
    <property type="project" value="UniProtKB-UniRule"/>
</dbReference>
<dbReference type="Gene3D" id="1.20.5.3310">
    <property type="match status" value="1"/>
</dbReference>
<dbReference type="HAMAP" id="MF_00236">
    <property type="entry name" value="TatA_E"/>
    <property type="match status" value="1"/>
</dbReference>
<dbReference type="InterPro" id="IPR003369">
    <property type="entry name" value="TatA/B/E"/>
</dbReference>
<dbReference type="InterPro" id="IPR006312">
    <property type="entry name" value="TatA/E"/>
</dbReference>
<dbReference type="NCBIfam" id="TIGR01411">
    <property type="entry name" value="tatAE"/>
    <property type="match status" value="1"/>
</dbReference>
<dbReference type="PANTHER" id="PTHR42982">
    <property type="entry name" value="SEC-INDEPENDENT PROTEIN TRANSLOCASE PROTEIN TATA"/>
    <property type="match status" value="1"/>
</dbReference>
<dbReference type="PANTHER" id="PTHR42982:SF1">
    <property type="entry name" value="SEC-INDEPENDENT PROTEIN TRANSLOCASE PROTEIN TATA"/>
    <property type="match status" value="1"/>
</dbReference>
<dbReference type="Pfam" id="PF02416">
    <property type="entry name" value="TatA_B_E"/>
    <property type="match status" value="1"/>
</dbReference>
<proteinExistence type="inferred from homology"/>
<gene>
    <name evidence="1" type="primary">tatA</name>
    <name type="ordered locus">DehaBAV1_1348</name>
</gene>
<reference key="1">
    <citation type="submission" date="2007-05" db="EMBL/GenBank/DDBJ databases">
        <title>Complete sequence of Dehalococcoides sp. BAV1.</title>
        <authorList>
            <consortium name="US DOE Joint Genome Institute"/>
            <person name="Copeland A."/>
            <person name="Lucas S."/>
            <person name="Lapidus A."/>
            <person name="Barry K."/>
            <person name="Detter J.C."/>
            <person name="Glavina del Rio T."/>
            <person name="Hammon N."/>
            <person name="Israni S."/>
            <person name="Pitluck S."/>
            <person name="Lowry S."/>
            <person name="Clum A."/>
            <person name="Schmutz J."/>
            <person name="Larimer F."/>
            <person name="Land M."/>
            <person name="Hauser L."/>
            <person name="Kyrpides N."/>
            <person name="Kim E."/>
            <person name="Ritalahti K.M."/>
            <person name="Loeffler F."/>
            <person name="Richardson P."/>
        </authorList>
    </citation>
    <scope>NUCLEOTIDE SEQUENCE [LARGE SCALE GENOMIC DNA]</scope>
    <source>
        <strain>ATCC BAA-2100 / JCM 16839 / KCTC 5957 / BAV1</strain>
    </source>
</reference>
<sequence>MPKIGPMEILIIVLLVVVVFGVGKLPQVGDAIGKGIRNFRKASTGEDAKEEVETKEETKPAEKSE</sequence>
<accession>A5FPF2</accession>
<evidence type="ECO:0000255" key="1">
    <source>
        <dbReference type="HAMAP-Rule" id="MF_00236"/>
    </source>
</evidence>
<evidence type="ECO:0000256" key="2">
    <source>
        <dbReference type="SAM" id="MobiDB-lite"/>
    </source>
</evidence>
<name>TATA_DEHMB</name>
<protein>
    <recommendedName>
        <fullName evidence="1">Sec-independent protein translocase protein TatA</fullName>
    </recommendedName>
</protein>
<organism>
    <name type="scientific">Dehalococcoides mccartyi (strain ATCC BAA-2100 / JCM 16839 / KCTC 5957 / BAV1)</name>
    <dbReference type="NCBI Taxonomy" id="216389"/>
    <lineage>
        <taxon>Bacteria</taxon>
        <taxon>Bacillati</taxon>
        <taxon>Chloroflexota</taxon>
        <taxon>Dehalococcoidia</taxon>
        <taxon>Dehalococcoidales</taxon>
        <taxon>Dehalococcoidaceae</taxon>
        <taxon>Dehalococcoides</taxon>
    </lineage>
</organism>
<keyword id="KW-1003">Cell membrane</keyword>
<keyword id="KW-0472">Membrane</keyword>
<keyword id="KW-0653">Protein transport</keyword>
<keyword id="KW-0811">Translocation</keyword>
<keyword id="KW-0812">Transmembrane</keyword>
<keyword id="KW-1133">Transmembrane helix</keyword>
<keyword id="KW-0813">Transport</keyword>